<organism>
    <name type="scientific">Carsonella ruddii (strain PV)</name>
    <dbReference type="NCBI Taxonomy" id="387662"/>
    <lineage>
        <taxon>Bacteria</taxon>
        <taxon>Pseudomonadati</taxon>
        <taxon>Pseudomonadota</taxon>
        <taxon>Gammaproteobacteria</taxon>
        <taxon>Oceanospirillales</taxon>
        <taxon>Halomonadaceae</taxon>
        <taxon>Zymobacter group</taxon>
        <taxon>Candidatus Carsonella</taxon>
    </lineage>
</organism>
<sequence>MVMITLINNIIRLINSYNSGKNICICIYSKISMLLLGILIEKKIIKSFFVLLFKNKKKIFVIIKTIILIKLFSKPSNKRYIKNKYLKKIEFNNGLIISTNIGLLTIRECLKLKIGGKIFFSII</sequence>
<gene>
    <name type="primary">rpsH</name>
    <name type="ordered locus">CRP_144</name>
</gene>
<name>RS8_CARRP</name>
<reference key="1">
    <citation type="journal article" date="2006" name="Science">
        <title>The 160-kilobase genome of the bacterial endosymbiont Carsonella.</title>
        <authorList>
            <person name="Nakabachi A."/>
            <person name="Yamashita A."/>
            <person name="Toh H."/>
            <person name="Ishikawa H."/>
            <person name="Dunbar H.E."/>
            <person name="Moran N.A."/>
            <person name="Hattori M."/>
        </authorList>
    </citation>
    <scope>NUCLEOTIDE SEQUENCE [LARGE SCALE GENOMIC DNA]</scope>
    <source>
        <strain>PV</strain>
    </source>
</reference>
<dbReference type="EMBL" id="AP009180">
    <property type="protein sequence ID" value="BAF35175.1"/>
    <property type="molecule type" value="Genomic_DNA"/>
</dbReference>
<dbReference type="SMR" id="Q05FJ6"/>
<dbReference type="STRING" id="387662.CRP_144"/>
<dbReference type="KEGG" id="crp:CRP_144"/>
<dbReference type="HOGENOM" id="CLU_2022482_0_0_6"/>
<dbReference type="Proteomes" id="UP000000777">
    <property type="component" value="Chromosome"/>
</dbReference>
<dbReference type="GO" id="GO:1990904">
    <property type="term" value="C:ribonucleoprotein complex"/>
    <property type="evidence" value="ECO:0007669"/>
    <property type="project" value="UniProtKB-KW"/>
</dbReference>
<dbReference type="GO" id="GO:0005840">
    <property type="term" value="C:ribosome"/>
    <property type="evidence" value="ECO:0007669"/>
    <property type="project" value="UniProtKB-KW"/>
</dbReference>
<dbReference type="GO" id="GO:0019843">
    <property type="term" value="F:rRNA binding"/>
    <property type="evidence" value="ECO:0007669"/>
    <property type="project" value="UniProtKB-KW"/>
</dbReference>
<dbReference type="GO" id="GO:0003735">
    <property type="term" value="F:structural constituent of ribosome"/>
    <property type="evidence" value="ECO:0007669"/>
    <property type="project" value="InterPro"/>
</dbReference>
<dbReference type="GO" id="GO:0006412">
    <property type="term" value="P:translation"/>
    <property type="evidence" value="ECO:0007669"/>
    <property type="project" value="InterPro"/>
</dbReference>
<dbReference type="Gene3D" id="3.30.1490.10">
    <property type="match status" value="1"/>
</dbReference>
<dbReference type="InterPro" id="IPR000630">
    <property type="entry name" value="Ribosomal_uS8"/>
</dbReference>
<dbReference type="InterPro" id="IPR035987">
    <property type="entry name" value="Ribosomal_uS8_sf"/>
</dbReference>
<dbReference type="Pfam" id="PF00410">
    <property type="entry name" value="Ribosomal_S8"/>
    <property type="match status" value="1"/>
</dbReference>
<dbReference type="SUPFAM" id="SSF56047">
    <property type="entry name" value="Ribosomal protein S8"/>
    <property type="match status" value="1"/>
</dbReference>
<proteinExistence type="inferred from homology"/>
<feature type="chain" id="PRO_0000305740" description="Small ribosomal subunit protein uS8">
    <location>
        <begin position="1"/>
        <end position="123"/>
    </location>
</feature>
<comment type="function">
    <text evidence="1">One of the primary rRNA binding proteins, it binds directly to 16S rRNA central domain where it helps coordinate assembly of the platform of the 30S subunit.</text>
</comment>
<comment type="subunit">
    <text evidence="1">Part of the 30S ribosomal subunit. Contacts proteins S5 and S12 (By similarity).</text>
</comment>
<comment type="similarity">
    <text evidence="2">Belongs to the universal ribosomal protein uS8 family.</text>
</comment>
<protein>
    <recommendedName>
        <fullName evidence="2">Small ribosomal subunit protein uS8</fullName>
    </recommendedName>
    <alternativeName>
        <fullName>30S ribosomal protein S8</fullName>
    </alternativeName>
</protein>
<keyword id="KW-0687">Ribonucleoprotein</keyword>
<keyword id="KW-0689">Ribosomal protein</keyword>
<keyword id="KW-0694">RNA-binding</keyword>
<keyword id="KW-0699">rRNA-binding</keyword>
<evidence type="ECO:0000250" key="1"/>
<evidence type="ECO:0000305" key="2"/>
<accession>Q05FJ6</accession>